<dbReference type="EC" id="2.7.7.6" evidence="1"/>
<dbReference type="EMBL" id="X04642">
    <property type="protein sequence ID" value="CAA28302.1"/>
    <property type="molecule type" value="Genomic_DNA"/>
</dbReference>
<dbReference type="EMBL" id="AF170176">
    <property type="protein sequence ID" value="AAF33499.1"/>
    <property type="molecule type" value="Genomic_DNA"/>
</dbReference>
<dbReference type="EMBL" id="AE006468">
    <property type="protein sequence ID" value="AAL22981.1"/>
    <property type="molecule type" value="Genomic_DNA"/>
</dbReference>
<dbReference type="EMBL" id="M38311">
    <property type="protein sequence ID" value="AAA27215.1"/>
    <property type="molecule type" value="Genomic_DNA"/>
</dbReference>
<dbReference type="PIR" id="S01794">
    <property type="entry name" value="RNEBBT"/>
</dbReference>
<dbReference type="RefSeq" id="NP_463022.1">
    <property type="nucleotide sequence ID" value="NC_003197.2"/>
</dbReference>
<dbReference type="RefSeq" id="WP_000263106.1">
    <property type="nucleotide sequence ID" value="NC_003197.2"/>
</dbReference>
<dbReference type="SMR" id="P06173"/>
<dbReference type="STRING" id="99287.STM4153"/>
<dbReference type="PaxDb" id="99287-STM4153"/>
<dbReference type="GeneID" id="1255679"/>
<dbReference type="KEGG" id="stm:STM4153"/>
<dbReference type="PATRIC" id="fig|99287.12.peg.4365"/>
<dbReference type="HOGENOM" id="CLU_000524_4_0_6"/>
<dbReference type="OMA" id="FMTWEGY"/>
<dbReference type="PhylomeDB" id="P06173"/>
<dbReference type="BioCyc" id="SENT99287:STM4153-MONOMER"/>
<dbReference type="Proteomes" id="UP000001014">
    <property type="component" value="Chromosome"/>
</dbReference>
<dbReference type="GO" id="GO:0000428">
    <property type="term" value="C:DNA-directed RNA polymerase complex"/>
    <property type="evidence" value="ECO:0007669"/>
    <property type="project" value="UniProtKB-KW"/>
</dbReference>
<dbReference type="GO" id="GO:0003677">
    <property type="term" value="F:DNA binding"/>
    <property type="evidence" value="ECO:0007669"/>
    <property type="project" value="UniProtKB-UniRule"/>
</dbReference>
<dbReference type="GO" id="GO:0003899">
    <property type="term" value="F:DNA-directed RNA polymerase activity"/>
    <property type="evidence" value="ECO:0007669"/>
    <property type="project" value="UniProtKB-UniRule"/>
</dbReference>
<dbReference type="GO" id="GO:0032549">
    <property type="term" value="F:ribonucleoside binding"/>
    <property type="evidence" value="ECO:0007669"/>
    <property type="project" value="InterPro"/>
</dbReference>
<dbReference type="GO" id="GO:0006351">
    <property type="term" value="P:DNA-templated transcription"/>
    <property type="evidence" value="ECO:0007669"/>
    <property type="project" value="UniProtKB-UniRule"/>
</dbReference>
<dbReference type="CDD" id="cd00653">
    <property type="entry name" value="RNA_pol_B_RPB2"/>
    <property type="match status" value="1"/>
</dbReference>
<dbReference type="FunFam" id="2.30.150.10:FF:000001">
    <property type="entry name" value="DNA-directed RNA polymerase subunit beta"/>
    <property type="match status" value="1"/>
</dbReference>
<dbReference type="FunFam" id="2.40.270.10:FF:000003">
    <property type="entry name" value="DNA-directed RNA polymerase subunit beta"/>
    <property type="match status" value="1"/>
</dbReference>
<dbReference type="FunFam" id="2.40.270.10:FF:000004">
    <property type="entry name" value="DNA-directed RNA polymerase subunit beta"/>
    <property type="match status" value="1"/>
</dbReference>
<dbReference type="FunFam" id="2.40.50.100:FF:000006">
    <property type="entry name" value="DNA-directed RNA polymerase subunit beta"/>
    <property type="match status" value="1"/>
</dbReference>
<dbReference type="FunFam" id="2.40.50.150:FF:000001">
    <property type="entry name" value="DNA-directed RNA polymerase subunit beta"/>
    <property type="match status" value="1"/>
</dbReference>
<dbReference type="FunFam" id="3.90.1100.10:FF:000002">
    <property type="entry name" value="DNA-directed RNA polymerase subunit beta"/>
    <property type="match status" value="1"/>
</dbReference>
<dbReference type="FunFam" id="3.90.1110.10:FF:000001">
    <property type="entry name" value="DNA-directed RNA polymerase subunit beta"/>
    <property type="match status" value="1"/>
</dbReference>
<dbReference type="FunFam" id="3.90.1110.10:FF:000004">
    <property type="entry name" value="DNA-directed RNA polymerase subunit beta"/>
    <property type="match status" value="1"/>
</dbReference>
<dbReference type="FunFam" id="3.90.1800.10:FF:000001">
    <property type="entry name" value="DNA-directed RNA polymerase subunit beta"/>
    <property type="match status" value="1"/>
</dbReference>
<dbReference type="Gene3D" id="2.40.50.100">
    <property type="match status" value="1"/>
</dbReference>
<dbReference type="Gene3D" id="2.40.50.150">
    <property type="match status" value="1"/>
</dbReference>
<dbReference type="Gene3D" id="3.90.1100.10">
    <property type="match status" value="2"/>
</dbReference>
<dbReference type="Gene3D" id="6.10.140.1670">
    <property type="match status" value="1"/>
</dbReference>
<dbReference type="Gene3D" id="2.30.150.10">
    <property type="entry name" value="DNA-directed RNA polymerase, beta subunit, external 1 domain"/>
    <property type="match status" value="1"/>
</dbReference>
<dbReference type="Gene3D" id="2.40.270.10">
    <property type="entry name" value="DNA-directed RNA polymerase, subunit 2, domain 6"/>
    <property type="match status" value="1"/>
</dbReference>
<dbReference type="Gene3D" id="3.90.1800.10">
    <property type="entry name" value="RNA polymerase alpha subunit dimerisation domain"/>
    <property type="match status" value="1"/>
</dbReference>
<dbReference type="Gene3D" id="3.90.1110.10">
    <property type="entry name" value="RNA polymerase Rpb2, domain 2"/>
    <property type="match status" value="1"/>
</dbReference>
<dbReference type="HAMAP" id="MF_01321">
    <property type="entry name" value="RNApol_bact_RpoB"/>
    <property type="match status" value="1"/>
</dbReference>
<dbReference type="InterPro" id="IPR042107">
    <property type="entry name" value="DNA-dir_RNA_pol_bsu_ext_1_sf"/>
</dbReference>
<dbReference type="InterPro" id="IPR019462">
    <property type="entry name" value="DNA-dir_RNA_pol_bsu_external_1"/>
</dbReference>
<dbReference type="InterPro" id="IPR015712">
    <property type="entry name" value="DNA-dir_RNA_pol_su2"/>
</dbReference>
<dbReference type="InterPro" id="IPR007120">
    <property type="entry name" value="DNA-dir_RNAP_su2_dom"/>
</dbReference>
<dbReference type="InterPro" id="IPR037033">
    <property type="entry name" value="DNA-dir_RNAP_su2_hyb_sf"/>
</dbReference>
<dbReference type="InterPro" id="IPR010243">
    <property type="entry name" value="RNA_pol_bsu_bac"/>
</dbReference>
<dbReference type="InterPro" id="IPR007121">
    <property type="entry name" value="RNA_pol_bsu_CS"/>
</dbReference>
<dbReference type="InterPro" id="IPR007644">
    <property type="entry name" value="RNA_pol_bsu_protrusion"/>
</dbReference>
<dbReference type="InterPro" id="IPR007642">
    <property type="entry name" value="RNA_pol_Rpb2_2"/>
</dbReference>
<dbReference type="InterPro" id="IPR037034">
    <property type="entry name" value="RNA_pol_Rpb2_2_sf"/>
</dbReference>
<dbReference type="InterPro" id="IPR007645">
    <property type="entry name" value="RNA_pol_Rpb2_3"/>
</dbReference>
<dbReference type="InterPro" id="IPR007641">
    <property type="entry name" value="RNA_pol_Rpb2_7"/>
</dbReference>
<dbReference type="InterPro" id="IPR014724">
    <property type="entry name" value="RNA_pol_RPB2_OB-fold"/>
</dbReference>
<dbReference type="NCBIfam" id="NF001616">
    <property type="entry name" value="PRK00405.1"/>
    <property type="match status" value="1"/>
</dbReference>
<dbReference type="NCBIfam" id="TIGR02013">
    <property type="entry name" value="rpoB"/>
    <property type="match status" value="1"/>
</dbReference>
<dbReference type="PANTHER" id="PTHR20856">
    <property type="entry name" value="DNA-DIRECTED RNA POLYMERASE I SUBUNIT 2"/>
    <property type="match status" value="1"/>
</dbReference>
<dbReference type="Pfam" id="PF04563">
    <property type="entry name" value="RNA_pol_Rpb2_1"/>
    <property type="match status" value="1"/>
</dbReference>
<dbReference type="Pfam" id="PF04561">
    <property type="entry name" value="RNA_pol_Rpb2_2"/>
    <property type="match status" value="2"/>
</dbReference>
<dbReference type="Pfam" id="PF04565">
    <property type="entry name" value="RNA_pol_Rpb2_3"/>
    <property type="match status" value="1"/>
</dbReference>
<dbReference type="Pfam" id="PF10385">
    <property type="entry name" value="RNA_pol_Rpb2_45"/>
    <property type="match status" value="1"/>
</dbReference>
<dbReference type="Pfam" id="PF00562">
    <property type="entry name" value="RNA_pol_Rpb2_6"/>
    <property type="match status" value="1"/>
</dbReference>
<dbReference type="Pfam" id="PF04560">
    <property type="entry name" value="RNA_pol_Rpb2_7"/>
    <property type="match status" value="1"/>
</dbReference>
<dbReference type="SUPFAM" id="SSF64484">
    <property type="entry name" value="beta and beta-prime subunits of DNA dependent RNA-polymerase"/>
    <property type="match status" value="1"/>
</dbReference>
<dbReference type="PROSITE" id="PS01166">
    <property type="entry name" value="RNA_POL_BETA"/>
    <property type="match status" value="1"/>
</dbReference>
<comment type="function">
    <text>DNA-dependent RNA polymerase catalyzes the transcription of DNA into RNA using the four ribonucleoside triphosphates as substrates.</text>
</comment>
<comment type="catalytic activity">
    <reaction evidence="1">
        <text>RNA(n) + a ribonucleoside 5'-triphosphate = RNA(n+1) + diphosphate</text>
        <dbReference type="Rhea" id="RHEA:21248"/>
        <dbReference type="Rhea" id="RHEA-COMP:14527"/>
        <dbReference type="Rhea" id="RHEA-COMP:17342"/>
        <dbReference type="ChEBI" id="CHEBI:33019"/>
        <dbReference type="ChEBI" id="CHEBI:61557"/>
        <dbReference type="ChEBI" id="CHEBI:140395"/>
        <dbReference type="EC" id="2.7.7.6"/>
    </reaction>
</comment>
<comment type="subunit">
    <text evidence="1">The RNAP catalytic core consists of 2 alpha, 1 beta, 1 beta' and 1 omega subunit. When a sigma factor is associated with the core the holoenzyme is formed, which can initiate transcription.</text>
</comment>
<comment type="similarity">
    <text evidence="1">Belongs to the RNA polymerase beta chain family.</text>
</comment>
<sequence>MVYSYTEKKRIRKDFGKRPQVLDVPYLLSIQLDSFQKFIEQDPEGQYGLEAAFRSVFPIQSYSGNSELQYVSYRLGEPVFDVQECQIRGVTYSAPLRVKLRLVIYEREAPEGTVKDIKEQEVYMGEIPLMTDNGTFVINGTERVIVSQLHRSPGVFFDSDKGKTHSSGKVLYNARIIPYRGSWLDFEFDPKDNLFVRIDRRRKLPATIILRALNYTTEQILDLFFEKVVFEIRDNKLQMELIPERLRGETASFDIEANGKVYVEKGRRITARHIRQLEKDDIKHIEVPVEYIAGKVVSKDYVDESTGELICAANMELSLDLLAKLSQSGHKRIETLFTNDLDHGPYISETVRVDPTNDRLSALVEIYRMMRPGEPPTREAAESLFENLFFSEDRYDLSAVGRMKFNRSLLRDEIEGSGILSKDDIIDVMKKLIDIRNGKGEVDDIDHLGNRRIRSVGEMAENQFRVGLVRVERAVKERLSLGDLDTLMPQDMINAKPISAAVKEFFGSSQLSQFMDQNNPLSEITHKRRISALGPGGLTRERAGFEVRDVHPTHYGRVCPIETPEGPNIGLINSLSVYAQTNEYGFLETPYRRVVDGVVTDEIHYLSAIEEGNYVIAQANSNLDDEGHFVEDLVTCRSKGESSLFSRDQVDYMDVSTQQVVSVGASLIPFLEHDDANRALMGANMQRQAVPTLRADKPLVGTGMERAVAVDSGVTAVAKRGGTVQYVDASRIVIKVNEDEMYPGEAGIDIYNLTKYTRSNQNTCINQMPCVSLGEPVERGDVLADGPSTDLGELALGQNMRVAFMPWNGYNFEDSILVSERVVQEDRFTTIHIQELACVSRDTKLGPEEITADIPNVGEAALSKLDESGIVYIGAEVTGGDILVGKVTPKGETQLTPEEKLLRAIFGEKASDVKDSSLRVPNGVSGTVIDVQVFTRDGVEKDKRALEIEEMQLKQAKKDLSEELQILEAGLFSRIRAVLVSSGVEAEKLDKLPRDRWLELGLTDEEKQNQLEQLAEQYDELKHEFEKKLEAKRRKITQGDDLAPGVLKIVKVYLAVKRRIQPGDKMAGRHGNKGVISKINPIEDMPYDENGTPVDIVLNPLGVPSRMNIGQILETHLGMAAKGIGDKINAMLKQQQEVAKLREFIQRAYDLGADVRQKVDLSTFSDDEVLRLAENLRKGMPIATPVFDGAKEAEIKELLKLGDLPTSGQITLFDGRTGEQFERPVTVGYMYMLKLNHLVDDKMHARSTGSYSLVTQQPLGGKAQFGGQRFGEMEVWALEAYGAAYTLQEMLTVKSDDVNGRTKMYKNIVDGNHQMEPGMPESFNVLLKEIRSLGINIELEDE</sequence>
<organism>
    <name type="scientific">Salmonella typhimurium (strain LT2 / SGSC1412 / ATCC 700720)</name>
    <dbReference type="NCBI Taxonomy" id="99287"/>
    <lineage>
        <taxon>Bacteria</taxon>
        <taxon>Pseudomonadati</taxon>
        <taxon>Pseudomonadota</taxon>
        <taxon>Gammaproteobacteria</taxon>
        <taxon>Enterobacterales</taxon>
        <taxon>Enterobacteriaceae</taxon>
        <taxon>Salmonella</taxon>
    </lineage>
</organism>
<feature type="chain" id="PRO_0000047953" description="DNA-directed RNA polymerase subunit beta">
    <location>
        <begin position="1"/>
        <end position="1342"/>
    </location>
</feature>
<feature type="sequence conflict" description="In Ref. 4; AAA27215." evidence="2" ref="4">
    <original>G</original>
    <variation>A</variation>
    <location>
        <position position="401"/>
    </location>
</feature>
<feature type="sequence conflict" description="In Ref. 1, 2 and 4." evidence="2" ref="1 2 4">
    <original>R</original>
    <variation>L</variation>
    <location>
        <position position="542"/>
    </location>
</feature>
<reference key="1">
    <citation type="journal article" date="1986" name="Dokl. Biochem.">
        <title>Nucleotide sequence of the rpoB gene of Samonella typhimurium coding for the beta-subunit of RNA polymerase.</title>
        <authorList>
            <person name="Sverdlov E.D."/>
            <person name="Lisitsyn N.A."/>
            <person name="Guryev S.O."/>
            <person name="Monastyrskaya G.S."/>
        </authorList>
    </citation>
    <scope>NUCLEOTIDE SEQUENCE [GENOMIC DNA]</scope>
</reference>
<reference key="2">
    <citation type="journal article" date="1988" name="Eur. J. Biochem.">
        <title>Genes coding for RNA polymerase beta subunit in bacteria. Structure/function analysis.</title>
        <authorList>
            <person name="Lisitsyn N.A."/>
            <person name="Monastyrskaya G.S."/>
            <person name="Sverdlov E.D."/>
        </authorList>
    </citation>
    <scope>NUCLEOTIDE SEQUENCE [GENOMIC DNA]</scope>
</reference>
<reference key="3">
    <citation type="journal article" date="2001" name="Nature">
        <title>Complete genome sequence of Salmonella enterica serovar Typhimurium LT2.</title>
        <authorList>
            <person name="McClelland M."/>
            <person name="Sanderson K.E."/>
            <person name="Spieth J."/>
            <person name="Clifton S.W."/>
            <person name="Latreille P."/>
            <person name="Courtney L."/>
            <person name="Porwollik S."/>
            <person name="Ali J."/>
            <person name="Dante M."/>
            <person name="Du F."/>
            <person name="Hou S."/>
            <person name="Layman D."/>
            <person name="Leonard S."/>
            <person name="Nguyen C."/>
            <person name="Scott K."/>
            <person name="Holmes A."/>
            <person name="Grewal N."/>
            <person name="Mulvaney E."/>
            <person name="Ryan E."/>
            <person name="Sun H."/>
            <person name="Florea L."/>
            <person name="Miller W."/>
            <person name="Stoneking T."/>
            <person name="Nhan M."/>
            <person name="Waterston R."/>
            <person name="Wilson R.K."/>
        </authorList>
    </citation>
    <scope>NUCLEOTIDE SEQUENCE [LARGE SCALE GENOMIC DNA]</scope>
    <source>
        <strain>LT2 / SGSC1412 / ATCC 700720</strain>
    </source>
</reference>
<reference key="4">
    <citation type="journal article" date="1986" name="Bioorg. Khim.">
        <title>Genes encoding the beta-subunit of bacterial RNA-polymerases. I. Primary structure of the EcoRI-C fragment of the Salmonella typhimurium gene rpoB.</title>
        <authorList>
            <person name="Sverdlov E.D."/>
            <person name="Lisitsyn N.A."/>
            <person name="Guryev S.O."/>
            <person name="Smirnov Y.V."/>
            <person name="Rostapshov V.M."/>
            <person name="Monastyrskaya G.S."/>
        </authorList>
    </citation>
    <scope>NUCLEOTIDE SEQUENCE [GENOMIC DNA] OF 187-1144</scope>
</reference>
<accession>P06173</accession>
<accession>Q9L9J8</accession>
<evidence type="ECO:0000255" key="1">
    <source>
        <dbReference type="HAMAP-Rule" id="MF_01321"/>
    </source>
</evidence>
<evidence type="ECO:0000305" key="2"/>
<gene>
    <name evidence="1" type="primary">rpoB</name>
    <name type="ordered locus">STM4153</name>
    <name type="ORF">STMF1.12</name>
</gene>
<keyword id="KW-0240">DNA-directed RNA polymerase</keyword>
<keyword id="KW-0548">Nucleotidyltransferase</keyword>
<keyword id="KW-1185">Reference proteome</keyword>
<keyword id="KW-0804">Transcription</keyword>
<keyword id="KW-0808">Transferase</keyword>
<name>RPOB_SALTY</name>
<protein>
    <recommendedName>
        <fullName evidence="1">DNA-directed RNA polymerase subunit beta</fullName>
        <shortName evidence="1">RNAP subunit beta</shortName>
        <ecNumber evidence="1">2.7.7.6</ecNumber>
    </recommendedName>
    <alternativeName>
        <fullName evidence="1">RNA polymerase subunit beta</fullName>
    </alternativeName>
    <alternativeName>
        <fullName evidence="1">Transcriptase subunit beta</fullName>
    </alternativeName>
</protein>
<proteinExistence type="inferred from homology"/>